<proteinExistence type="inferred from homology"/>
<dbReference type="EC" id="2.1.1.223" evidence="1"/>
<dbReference type="EMBL" id="CP000647">
    <property type="protein sequence ID" value="ABR78310.1"/>
    <property type="molecule type" value="Genomic_DNA"/>
</dbReference>
<dbReference type="SMR" id="A6TCI9"/>
<dbReference type="STRING" id="272620.KPN_02900"/>
<dbReference type="PaxDb" id="272620-KPN_02900"/>
<dbReference type="EnsemblBacteria" id="ABR78310">
    <property type="protein sequence ID" value="ABR78310"/>
    <property type="gene ID" value="KPN_02900"/>
</dbReference>
<dbReference type="KEGG" id="kpn:KPN_02900"/>
<dbReference type="HOGENOM" id="CLU_061983_0_0_6"/>
<dbReference type="Proteomes" id="UP000000265">
    <property type="component" value="Chromosome"/>
</dbReference>
<dbReference type="GO" id="GO:0005737">
    <property type="term" value="C:cytoplasm"/>
    <property type="evidence" value="ECO:0007669"/>
    <property type="project" value="UniProtKB-SubCell"/>
</dbReference>
<dbReference type="GO" id="GO:0003676">
    <property type="term" value="F:nucleic acid binding"/>
    <property type="evidence" value="ECO:0007669"/>
    <property type="project" value="InterPro"/>
</dbReference>
<dbReference type="GO" id="GO:0016430">
    <property type="term" value="F:tRNA (adenine-N6)-methyltransferase activity"/>
    <property type="evidence" value="ECO:0007669"/>
    <property type="project" value="UniProtKB-UniRule"/>
</dbReference>
<dbReference type="GO" id="GO:0032259">
    <property type="term" value="P:methylation"/>
    <property type="evidence" value="ECO:0007669"/>
    <property type="project" value="UniProtKB-KW"/>
</dbReference>
<dbReference type="GO" id="GO:0008033">
    <property type="term" value="P:tRNA processing"/>
    <property type="evidence" value="ECO:0007669"/>
    <property type="project" value="UniProtKB-UniRule"/>
</dbReference>
<dbReference type="CDD" id="cd02440">
    <property type="entry name" value="AdoMet_MTases"/>
    <property type="match status" value="1"/>
</dbReference>
<dbReference type="Gene3D" id="3.40.50.150">
    <property type="entry name" value="Vaccinia Virus protein VP39"/>
    <property type="match status" value="1"/>
</dbReference>
<dbReference type="HAMAP" id="MF_01872">
    <property type="entry name" value="tRNA_methyltr_YfiC"/>
    <property type="match status" value="1"/>
</dbReference>
<dbReference type="InterPro" id="IPR002052">
    <property type="entry name" value="DNA_methylase_N6_adenine_CS"/>
</dbReference>
<dbReference type="InterPro" id="IPR029063">
    <property type="entry name" value="SAM-dependent_MTases_sf"/>
</dbReference>
<dbReference type="InterPro" id="IPR007848">
    <property type="entry name" value="Small_mtfrase_dom"/>
</dbReference>
<dbReference type="InterPro" id="IPR050210">
    <property type="entry name" value="tRNA_Adenine-N(6)_MTase"/>
</dbReference>
<dbReference type="InterPro" id="IPR022882">
    <property type="entry name" value="tRNA_adenine-N6_MeTrfase"/>
</dbReference>
<dbReference type="NCBIfam" id="NF047853">
    <property type="entry name" value="tRm6a37MtseTrmN"/>
    <property type="match status" value="1"/>
</dbReference>
<dbReference type="PANTHER" id="PTHR47739">
    <property type="entry name" value="TRNA1(VAL) (ADENINE(37)-N6)-METHYLTRANSFERASE"/>
    <property type="match status" value="1"/>
</dbReference>
<dbReference type="PANTHER" id="PTHR47739:SF1">
    <property type="entry name" value="TRNA1(VAL) (ADENINE(37)-N6)-METHYLTRANSFERASE"/>
    <property type="match status" value="1"/>
</dbReference>
<dbReference type="Pfam" id="PF05175">
    <property type="entry name" value="MTS"/>
    <property type="match status" value="1"/>
</dbReference>
<dbReference type="SUPFAM" id="SSF53335">
    <property type="entry name" value="S-adenosyl-L-methionine-dependent methyltransferases"/>
    <property type="match status" value="1"/>
</dbReference>
<dbReference type="PROSITE" id="PS00092">
    <property type="entry name" value="N6_MTASE"/>
    <property type="match status" value="1"/>
</dbReference>
<evidence type="ECO:0000255" key="1">
    <source>
        <dbReference type="HAMAP-Rule" id="MF_01872"/>
    </source>
</evidence>
<organism>
    <name type="scientific">Klebsiella pneumoniae subsp. pneumoniae (strain ATCC 700721 / MGH 78578)</name>
    <dbReference type="NCBI Taxonomy" id="272620"/>
    <lineage>
        <taxon>Bacteria</taxon>
        <taxon>Pseudomonadati</taxon>
        <taxon>Pseudomonadota</taxon>
        <taxon>Gammaproteobacteria</taxon>
        <taxon>Enterobacterales</taxon>
        <taxon>Enterobacteriaceae</taxon>
        <taxon>Klebsiella/Raoultella group</taxon>
        <taxon>Klebsiella</taxon>
        <taxon>Klebsiella pneumoniae complex</taxon>
    </lineage>
</organism>
<name>TRMN6_KLEP7</name>
<gene>
    <name type="ordered locus">KPN78578_28490</name>
    <name type="ORF">KPN_02900</name>
</gene>
<comment type="function">
    <text evidence="1">Specifically methylates the adenine in position 37 of tRNA(1)(Val) (anticodon cmo5UAC).</text>
</comment>
<comment type="catalytic activity">
    <reaction evidence="1">
        <text>adenosine(37) in tRNA1(Val) + S-adenosyl-L-methionine = N(6)-methyladenosine(37) in tRNA1(Val) + S-adenosyl-L-homocysteine + H(+)</text>
        <dbReference type="Rhea" id="RHEA:43160"/>
        <dbReference type="Rhea" id="RHEA-COMP:10369"/>
        <dbReference type="Rhea" id="RHEA-COMP:10370"/>
        <dbReference type="ChEBI" id="CHEBI:15378"/>
        <dbReference type="ChEBI" id="CHEBI:57856"/>
        <dbReference type="ChEBI" id="CHEBI:59789"/>
        <dbReference type="ChEBI" id="CHEBI:74411"/>
        <dbReference type="ChEBI" id="CHEBI:74449"/>
        <dbReference type="EC" id="2.1.1.223"/>
    </reaction>
</comment>
<comment type="subcellular location">
    <subcellularLocation>
        <location evidence="1">Cytoplasm</location>
    </subcellularLocation>
</comment>
<comment type="similarity">
    <text evidence="1">Belongs to the methyltransferase superfamily. tRNA (adenine-N(6)-)-methyltransferase family.</text>
</comment>
<accession>A6TCI9</accession>
<sequence>MSQSKFALPRNGFTFKRFFVAHDRCAMKVGTDGILLGAWAPIAGVKHVLDIGAGSGLLALMLAQRTGDDVHVEAVELDEEAAAQARENALASPWASRIEVWQADIHQWQPSQTRRYELIISNPPFFAEGVPCATSQREQARYTTTLDHASLLTCAAEHITEEGFFCVVLPVDIGNAFIERARAMGWHLRLRTDVAETELRPPHRVLLAFSPTAGECFSDRLAIRGPEQQYSEGFTALTEDFYLFM</sequence>
<keyword id="KW-0963">Cytoplasm</keyword>
<keyword id="KW-0489">Methyltransferase</keyword>
<keyword id="KW-0949">S-adenosyl-L-methionine</keyword>
<keyword id="KW-0808">Transferase</keyword>
<keyword id="KW-0819">tRNA processing</keyword>
<reference key="1">
    <citation type="submission" date="2006-09" db="EMBL/GenBank/DDBJ databases">
        <authorList>
            <consortium name="The Klebsiella pneumonia Genome Sequencing Project"/>
            <person name="McClelland M."/>
            <person name="Sanderson E.K."/>
            <person name="Spieth J."/>
            <person name="Clifton W.S."/>
            <person name="Latreille P."/>
            <person name="Sabo A."/>
            <person name="Pepin K."/>
            <person name="Bhonagiri V."/>
            <person name="Porwollik S."/>
            <person name="Ali J."/>
            <person name="Wilson R.K."/>
        </authorList>
    </citation>
    <scope>NUCLEOTIDE SEQUENCE [LARGE SCALE GENOMIC DNA]</scope>
    <source>
        <strain>ATCC 700721 / MGH 78578</strain>
    </source>
</reference>
<feature type="chain" id="PRO_0000387390" description="tRNA1(Val) (adenine(37)-N6)-methyltransferase">
    <location>
        <begin position="1"/>
        <end position="245"/>
    </location>
</feature>
<protein>
    <recommendedName>
        <fullName evidence="1">tRNA1(Val) (adenine(37)-N6)-methyltransferase</fullName>
        <ecNumber evidence="1">2.1.1.223</ecNumber>
    </recommendedName>
    <alternativeName>
        <fullName evidence="1">tRNA m6A37 methyltransferase</fullName>
    </alternativeName>
</protein>